<sequence>MVVMVKIVHAQTVLPENVLEELKRKTGENATKDAIAKAVEHYLMCPYTHEAPLEKRLEEVIKKKKK</sequence>
<keyword id="KW-1185">Reference proteome</keyword>
<protein>
    <recommendedName>
        <fullName>Uncharacterized protein AF_1718</fullName>
    </recommendedName>
</protein>
<organism>
    <name type="scientific">Archaeoglobus fulgidus (strain ATCC 49558 / DSM 4304 / JCM 9628 / NBRC 100126 / VC-16)</name>
    <dbReference type="NCBI Taxonomy" id="224325"/>
    <lineage>
        <taxon>Archaea</taxon>
        <taxon>Methanobacteriati</taxon>
        <taxon>Methanobacteriota</taxon>
        <taxon>Archaeoglobi</taxon>
        <taxon>Archaeoglobales</taxon>
        <taxon>Archaeoglobaceae</taxon>
        <taxon>Archaeoglobus</taxon>
    </lineage>
</organism>
<proteinExistence type="predicted"/>
<accession>O28556</accession>
<feature type="chain" id="PRO_0000128051" description="Uncharacterized protein AF_1718">
    <location>
        <begin position="1"/>
        <end position="66"/>
    </location>
</feature>
<dbReference type="EMBL" id="AE000782">
    <property type="protein sequence ID" value="AAB89541.1"/>
    <property type="molecule type" value="Genomic_DNA"/>
</dbReference>
<dbReference type="PIR" id="E69464">
    <property type="entry name" value="E69464"/>
</dbReference>
<dbReference type="SMR" id="O28556"/>
<dbReference type="STRING" id="224325.AF_1718"/>
<dbReference type="PaxDb" id="224325-AF_1718"/>
<dbReference type="EnsemblBacteria" id="AAB89541">
    <property type="protein sequence ID" value="AAB89541"/>
    <property type="gene ID" value="AF_1718"/>
</dbReference>
<dbReference type="KEGG" id="afu:AF_1718"/>
<dbReference type="eggNOG" id="arCOG06141">
    <property type="taxonomic scope" value="Archaea"/>
</dbReference>
<dbReference type="HOGENOM" id="CLU_199454_0_0_2"/>
<dbReference type="Proteomes" id="UP000002199">
    <property type="component" value="Chromosome"/>
</dbReference>
<dbReference type="InterPro" id="IPR020073">
    <property type="entry name" value="Uncharacterised_AF1718"/>
</dbReference>
<dbReference type="Pfam" id="PF17341">
    <property type="entry name" value="DUF5371"/>
    <property type="match status" value="1"/>
</dbReference>
<reference key="1">
    <citation type="journal article" date="1997" name="Nature">
        <title>The complete genome sequence of the hyperthermophilic, sulphate-reducing archaeon Archaeoglobus fulgidus.</title>
        <authorList>
            <person name="Klenk H.-P."/>
            <person name="Clayton R.A."/>
            <person name="Tomb J.-F."/>
            <person name="White O."/>
            <person name="Nelson K.E."/>
            <person name="Ketchum K.A."/>
            <person name="Dodson R.J."/>
            <person name="Gwinn M.L."/>
            <person name="Hickey E.K."/>
            <person name="Peterson J.D."/>
            <person name="Richardson D.L."/>
            <person name="Kerlavage A.R."/>
            <person name="Graham D.E."/>
            <person name="Kyrpides N.C."/>
            <person name="Fleischmann R.D."/>
            <person name="Quackenbush J."/>
            <person name="Lee N.H."/>
            <person name="Sutton G.G."/>
            <person name="Gill S.R."/>
            <person name="Kirkness E.F."/>
            <person name="Dougherty B.A."/>
            <person name="McKenney K."/>
            <person name="Adams M.D."/>
            <person name="Loftus B.J."/>
            <person name="Peterson S.N."/>
            <person name="Reich C.I."/>
            <person name="McNeil L.K."/>
            <person name="Badger J.H."/>
            <person name="Glodek A."/>
            <person name="Zhou L."/>
            <person name="Overbeek R."/>
            <person name="Gocayne J.D."/>
            <person name="Weidman J.F."/>
            <person name="McDonald L.A."/>
            <person name="Utterback T.R."/>
            <person name="Cotton M.D."/>
            <person name="Spriggs T."/>
            <person name="Artiach P."/>
            <person name="Kaine B.P."/>
            <person name="Sykes S.M."/>
            <person name="Sadow P.W."/>
            <person name="D'Andrea K.P."/>
            <person name="Bowman C."/>
            <person name="Fujii C."/>
            <person name="Garland S.A."/>
            <person name="Mason T.M."/>
            <person name="Olsen G.J."/>
            <person name="Fraser C.M."/>
            <person name="Smith H.O."/>
            <person name="Woese C.R."/>
            <person name="Venter J.C."/>
        </authorList>
    </citation>
    <scope>NUCLEOTIDE SEQUENCE [LARGE SCALE GENOMIC DNA]</scope>
    <source>
        <strain>ATCC 49558 / DSM 4304 / JCM 9628 / NBRC 100126 / VC-16</strain>
    </source>
</reference>
<gene>
    <name type="ordered locus">AF_1718</name>
</gene>
<name>Y1718_ARCFU</name>